<protein>
    <recommendedName>
        <fullName>Serine hydroxymethyltransferase, mitochondrial</fullName>
        <shortName>SHMT</shortName>
        <ecNumber>2.1.2.1</ecNumber>
    </recommendedName>
    <alternativeName>
        <fullName>Glycine hydroxymethyltransferase</fullName>
    </alternativeName>
    <alternativeName>
        <fullName>Serine methylase</fullName>
    </alternativeName>
</protein>
<evidence type="ECO:0000250" key="1"/>
<evidence type="ECO:0000255" key="2"/>
<evidence type="ECO:0000269" key="3">
    <source>
    </source>
</evidence>
<evidence type="ECO:0000305" key="4"/>
<proteinExistence type="inferred from homology"/>
<name>GLYM_EREGS</name>
<comment type="function">
    <text evidence="3">Interconversion of serine and glycine.</text>
</comment>
<comment type="catalytic activity">
    <reaction>
        <text>(6R)-5,10-methylene-5,6,7,8-tetrahydrofolate + glycine + H2O = (6S)-5,6,7,8-tetrahydrofolate + L-serine</text>
        <dbReference type="Rhea" id="RHEA:15481"/>
        <dbReference type="ChEBI" id="CHEBI:15377"/>
        <dbReference type="ChEBI" id="CHEBI:15636"/>
        <dbReference type="ChEBI" id="CHEBI:33384"/>
        <dbReference type="ChEBI" id="CHEBI:57305"/>
        <dbReference type="ChEBI" id="CHEBI:57453"/>
        <dbReference type="EC" id="2.1.2.1"/>
    </reaction>
</comment>
<comment type="cofactor">
    <cofactor evidence="1">
        <name>pyridoxal 5'-phosphate</name>
        <dbReference type="ChEBI" id="CHEBI:597326"/>
    </cofactor>
</comment>
<comment type="pathway">
    <text>One-carbon metabolism; tetrahydrofolate interconversion.</text>
</comment>
<comment type="subunit">
    <text evidence="1">Homotetramer.</text>
</comment>
<comment type="subcellular location">
    <subcellularLocation>
        <location>Mitochondrion</location>
    </subcellularLocation>
</comment>
<comment type="miscellaneous">
    <text>In eukaryotes there are two forms of the enzymes: a cytosolic one and a mitochondrial one.</text>
</comment>
<comment type="similarity">
    <text evidence="4">Belongs to the SHMT family.</text>
</comment>
<feature type="transit peptide" description="Mitochondrion" evidence="2">
    <location>
        <begin position="1"/>
        <end position="27"/>
    </location>
</feature>
<feature type="chain" id="PRO_0000032564" description="Serine hydroxymethyltransferase, mitochondrial">
    <location>
        <begin position="28"/>
        <end position="497"/>
    </location>
</feature>
<feature type="modified residue" description="N6-(pyridoxal phosphate)lysine" evidence="1">
    <location>
        <position position="272"/>
    </location>
</feature>
<feature type="sequence conflict" description="In Ref. 1; CAD27655." evidence="4" ref="1">
    <original>G</original>
    <variation>R</variation>
    <location>
        <position position="90"/>
    </location>
</feature>
<organism>
    <name type="scientific">Eremothecium gossypii (strain ATCC 10895 / CBS 109.51 / FGSC 9923 / NRRL Y-1056)</name>
    <name type="common">Yeast</name>
    <name type="synonym">Ashbya gossypii</name>
    <dbReference type="NCBI Taxonomy" id="284811"/>
    <lineage>
        <taxon>Eukaryota</taxon>
        <taxon>Fungi</taxon>
        <taxon>Dikarya</taxon>
        <taxon>Ascomycota</taxon>
        <taxon>Saccharomycotina</taxon>
        <taxon>Saccharomycetes</taxon>
        <taxon>Saccharomycetales</taxon>
        <taxon>Saccharomycetaceae</taxon>
        <taxon>Eremothecium</taxon>
    </lineage>
</organism>
<accession>Q758F0</accession>
<accession>Q5K5A0</accession>
<gene>
    <name type="primary">SHM1</name>
    <name type="ordered locus">AEL188W</name>
</gene>
<dbReference type="EC" id="2.1.2.1"/>
<dbReference type="EMBL" id="AJ438778">
    <property type="protein sequence ID" value="CAD27655.1"/>
    <property type="molecule type" value="Genomic_DNA"/>
</dbReference>
<dbReference type="EMBL" id="AE016818">
    <property type="protein sequence ID" value="AAS52497.1"/>
    <property type="molecule type" value="Genomic_DNA"/>
</dbReference>
<dbReference type="RefSeq" id="NP_984673.1">
    <property type="nucleotide sequence ID" value="NM_210026.1"/>
</dbReference>
<dbReference type="SMR" id="Q758F0"/>
<dbReference type="FunCoup" id="Q758F0">
    <property type="interactions" value="452"/>
</dbReference>
<dbReference type="STRING" id="284811.Q758F0"/>
<dbReference type="EnsemblFungi" id="AAS52497">
    <property type="protein sequence ID" value="AAS52497"/>
    <property type="gene ID" value="AGOS_AEL188W"/>
</dbReference>
<dbReference type="GeneID" id="4620858"/>
<dbReference type="KEGG" id="ago:AGOS_AEL188W"/>
<dbReference type="eggNOG" id="KOG2467">
    <property type="taxonomic scope" value="Eukaryota"/>
</dbReference>
<dbReference type="HOGENOM" id="CLU_022477_0_1_1"/>
<dbReference type="InParanoid" id="Q758F0"/>
<dbReference type="OMA" id="ANASVMH"/>
<dbReference type="OrthoDB" id="10265628at2759"/>
<dbReference type="UniPathway" id="UPA00193"/>
<dbReference type="Proteomes" id="UP000000591">
    <property type="component" value="Chromosome V"/>
</dbReference>
<dbReference type="GO" id="GO:0005737">
    <property type="term" value="C:cytoplasm"/>
    <property type="evidence" value="ECO:0000318"/>
    <property type="project" value="GO_Central"/>
</dbReference>
<dbReference type="GO" id="GO:0005739">
    <property type="term" value="C:mitochondrion"/>
    <property type="evidence" value="ECO:0000318"/>
    <property type="project" value="GO_Central"/>
</dbReference>
<dbReference type="GO" id="GO:0004372">
    <property type="term" value="F:glycine hydroxymethyltransferase activity"/>
    <property type="evidence" value="ECO:0000318"/>
    <property type="project" value="GO_Central"/>
</dbReference>
<dbReference type="GO" id="GO:0030170">
    <property type="term" value="F:pyridoxal phosphate binding"/>
    <property type="evidence" value="ECO:0000318"/>
    <property type="project" value="GO_Central"/>
</dbReference>
<dbReference type="GO" id="GO:0019264">
    <property type="term" value="P:glycine biosynthetic process from serine"/>
    <property type="evidence" value="ECO:0000318"/>
    <property type="project" value="GO_Central"/>
</dbReference>
<dbReference type="GO" id="GO:0035999">
    <property type="term" value="P:tetrahydrofolate interconversion"/>
    <property type="evidence" value="ECO:0007669"/>
    <property type="project" value="UniProtKB-UniPathway"/>
</dbReference>
<dbReference type="GO" id="GO:0046653">
    <property type="term" value="P:tetrahydrofolate metabolic process"/>
    <property type="evidence" value="ECO:0000318"/>
    <property type="project" value="GO_Central"/>
</dbReference>
<dbReference type="CDD" id="cd00378">
    <property type="entry name" value="SHMT"/>
    <property type="match status" value="1"/>
</dbReference>
<dbReference type="FunFam" id="3.40.640.10:FF:000097">
    <property type="entry name" value="Serine hydroxymethyltransferase"/>
    <property type="match status" value="1"/>
</dbReference>
<dbReference type="Gene3D" id="3.90.1150.10">
    <property type="entry name" value="Aspartate Aminotransferase, domain 1"/>
    <property type="match status" value="1"/>
</dbReference>
<dbReference type="Gene3D" id="3.40.640.10">
    <property type="entry name" value="Type I PLP-dependent aspartate aminotransferase-like (Major domain)"/>
    <property type="match status" value="1"/>
</dbReference>
<dbReference type="HAMAP" id="MF_00051">
    <property type="entry name" value="SHMT"/>
    <property type="match status" value="1"/>
</dbReference>
<dbReference type="InterPro" id="IPR015424">
    <property type="entry name" value="PyrdxlP-dep_Trfase"/>
</dbReference>
<dbReference type="InterPro" id="IPR015421">
    <property type="entry name" value="PyrdxlP-dep_Trfase_major"/>
</dbReference>
<dbReference type="InterPro" id="IPR015422">
    <property type="entry name" value="PyrdxlP-dep_Trfase_small"/>
</dbReference>
<dbReference type="InterPro" id="IPR001085">
    <property type="entry name" value="Ser_HO-MeTrfase"/>
</dbReference>
<dbReference type="InterPro" id="IPR049943">
    <property type="entry name" value="Ser_HO-MeTrfase-like"/>
</dbReference>
<dbReference type="InterPro" id="IPR019798">
    <property type="entry name" value="Ser_HO-MeTrfase_PLP_BS"/>
</dbReference>
<dbReference type="InterPro" id="IPR039429">
    <property type="entry name" value="SHMT-like_dom"/>
</dbReference>
<dbReference type="NCBIfam" id="NF000586">
    <property type="entry name" value="PRK00011.1"/>
    <property type="match status" value="1"/>
</dbReference>
<dbReference type="PANTHER" id="PTHR11680">
    <property type="entry name" value="SERINE HYDROXYMETHYLTRANSFERASE"/>
    <property type="match status" value="1"/>
</dbReference>
<dbReference type="PANTHER" id="PTHR11680:SF57">
    <property type="entry name" value="SERINE HYDROXYMETHYLTRANSFERASE, MITOCHONDRIAL"/>
    <property type="match status" value="1"/>
</dbReference>
<dbReference type="Pfam" id="PF00464">
    <property type="entry name" value="SHMT"/>
    <property type="match status" value="1"/>
</dbReference>
<dbReference type="PIRSF" id="PIRSF000412">
    <property type="entry name" value="SHMT"/>
    <property type="match status" value="1"/>
</dbReference>
<dbReference type="SUPFAM" id="SSF53383">
    <property type="entry name" value="PLP-dependent transferases"/>
    <property type="match status" value="1"/>
</dbReference>
<dbReference type="PROSITE" id="PS00096">
    <property type="entry name" value="SHMT"/>
    <property type="match status" value="1"/>
</dbReference>
<reference key="1">
    <citation type="journal article" date="2003" name="Biochem. J.">
        <title>Disruption of the SHM2 gene, encoding one of two serine hydroxymethyltransferase isoenzymes, reduces the flux from glycine to serine in Ashbya gossypii.</title>
        <authorList>
            <person name="Schluepen C."/>
            <person name="Santos M.A."/>
            <person name="Weber U."/>
            <person name="de Graaf A."/>
            <person name="Revuelta J.L."/>
            <person name="Stahmann K.-P."/>
        </authorList>
    </citation>
    <scope>NUCLEOTIDE SEQUENCE [GENOMIC DNA]</scope>
    <scope>FUNCTION</scope>
</reference>
<reference key="2">
    <citation type="journal article" date="2004" name="Science">
        <title>The Ashbya gossypii genome as a tool for mapping the ancient Saccharomyces cerevisiae genome.</title>
        <authorList>
            <person name="Dietrich F.S."/>
            <person name="Voegeli S."/>
            <person name="Brachat S."/>
            <person name="Lerch A."/>
            <person name="Gates K."/>
            <person name="Steiner S."/>
            <person name="Mohr C."/>
            <person name="Poehlmann R."/>
            <person name="Luedi P."/>
            <person name="Choi S."/>
            <person name="Wing R.A."/>
            <person name="Flavier A."/>
            <person name="Gaffney T.D."/>
            <person name="Philippsen P."/>
        </authorList>
    </citation>
    <scope>NUCLEOTIDE SEQUENCE [LARGE SCALE GENOMIC DNA]</scope>
    <source>
        <strain>ATCC 10895 / CBS 109.51 / FGSC 9923 / NRRL Y-1056</strain>
    </source>
</reference>
<reference key="3">
    <citation type="journal article" date="2013" name="G3 (Bethesda)">
        <title>Genomes of Ashbya fungi isolated from insects reveal four mating-type loci, numerous translocations, lack of transposons, and distinct gene duplications.</title>
        <authorList>
            <person name="Dietrich F.S."/>
            <person name="Voegeli S."/>
            <person name="Kuo S."/>
            <person name="Philippsen P."/>
        </authorList>
    </citation>
    <scope>GENOME REANNOTATION</scope>
    <source>
        <strain>ATCC 10895 / CBS 109.51 / FGSC 9923 / NRRL Y-1056</strain>
    </source>
</reference>
<keyword id="KW-0496">Mitochondrion</keyword>
<keyword id="KW-0554">One-carbon metabolism</keyword>
<keyword id="KW-0663">Pyridoxal phosphate</keyword>
<keyword id="KW-1185">Reference proteome</keyword>
<keyword id="KW-0808">Transferase</keyword>
<keyword id="KW-0809">Transit peptide</keyword>
<sequence length="497" mass="54708">MFIRRLHTSSRRLTCGEALRACQQTGARSANGQLMLSQHVQEFDPEMYDILTKERSRQKRSITLIPSENFTSVAVMNLLGSEMQNKYSEGYPGQRYYGGNQYIDMAESLCQKRALELYGLDPAKWGVNVQSLSGAPANLYAYSAIMEVGDRMMGLDLPHGGHLSHGYQLQNGNKISYISKYFQTMAYRVDPATGLVDYDTLSETSKLFRPKVIVAGTSAYARVLDYKRFREIADACGAYLLSDMAHVSGLVAAGVHPSPFEYSDIVTTTTHKSLRGPRGAMIFYRKGIRKVTKKGTEIMYDLDKRINFSVFPAHQGGPHNHTISALAVALKQAATPEFKNYQTAVVENAKVFGEELSKRGFSLVSGGTDTHLLLIDLSPMGIDGSRLETILERLNIAANKNTIPGDKSALYPSGLRVGTPAMTTRGFGPAEFGRVAAYINEAVKLAIGLKSQEPVDAKDAKTRLAHFKSFCAESEQVTKLANEVADWVAQYPVPGEL</sequence>